<feature type="chain" id="PRO_1000052963" description="Large ribosomal subunit protein bL25">
    <location>
        <begin position="1"/>
        <end position="95"/>
    </location>
</feature>
<organism>
    <name type="scientific">Shewanella baltica (strain OS185)</name>
    <dbReference type="NCBI Taxonomy" id="402882"/>
    <lineage>
        <taxon>Bacteria</taxon>
        <taxon>Pseudomonadati</taxon>
        <taxon>Pseudomonadota</taxon>
        <taxon>Gammaproteobacteria</taxon>
        <taxon>Alteromonadales</taxon>
        <taxon>Shewanellaceae</taxon>
        <taxon>Shewanella</taxon>
    </lineage>
</organism>
<sequence length="95" mass="10615">MSYTIQAQTRTEIGKGSSRRLRHAGKVPAVIYGQGKEPVSIVFDHKDIINIQANADFYTSTLTIVVDGKEVGVRAQAMQRHVFKPLIEHVDFVYA</sequence>
<comment type="function">
    <text evidence="1">This is one of the proteins that binds to the 5S RNA in the ribosome where it forms part of the central protuberance.</text>
</comment>
<comment type="subunit">
    <text evidence="1">Part of the 50S ribosomal subunit; part of the 5S rRNA/L5/L18/L25 subcomplex. Contacts the 5S rRNA. Binds to the 5S rRNA independently of L5 and L18.</text>
</comment>
<comment type="similarity">
    <text evidence="1">Belongs to the bacterial ribosomal protein bL25 family.</text>
</comment>
<dbReference type="EMBL" id="CP000753">
    <property type="protein sequence ID" value="ABS08070.1"/>
    <property type="molecule type" value="Genomic_DNA"/>
</dbReference>
<dbReference type="RefSeq" id="WP_006081398.1">
    <property type="nucleotide sequence ID" value="NC_009665.1"/>
</dbReference>
<dbReference type="SMR" id="A6WMN1"/>
<dbReference type="GeneID" id="11772134"/>
<dbReference type="KEGG" id="sbm:Shew185_1927"/>
<dbReference type="HOGENOM" id="CLU_137946_0_0_6"/>
<dbReference type="GO" id="GO:0022625">
    <property type="term" value="C:cytosolic large ribosomal subunit"/>
    <property type="evidence" value="ECO:0007669"/>
    <property type="project" value="TreeGrafter"/>
</dbReference>
<dbReference type="GO" id="GO:0008097">
    <property type="term" value="F:5S rRNA binding"/>
    <property type="evidence" value="ECO:0007669"/>
    <property type="project" value="InterPro"/>
</dbReference>
<dbReference type="GO" id="GO:0003735">
    <property type="term" value="F:structural constituent of ribosome"/>
    <property type="evidence" value="ECO:0007669"/>
    <property type="project" value="InterPro"/>
</dbReference>
<dbReference type="GO" id="GO:0006412">
    <property type="term" value="P:translation"/>
    <property type="evidence" value="ECO:0007669"/>
    <property type="project" value="UniProtKB-UniRule"/>
</dbReference>
<dbReference type="CDD" id="cd00495">
    <property type="entry name" value="Ribosomal_L25_TL5_CTC"/>
    <property type="match status" value="1"/>
</dbReference>
<dbReference type="FunFam" id="2.40.240.10:FF:000002">
    <property type="entry name" value="50S ribosomal protein L25"/>
    <property type="match status" value="1"/>
</dbReference>
<dbReference type="Gene3D" id="2.40.240.10">
    <property type="entry name" value="Ribosomal Protein L25, Chain P"/>
    <property type="match status" value="1"/>
</dbReference>
<dbReference type="HAMAP" id="MF_01336">
    <property type="entry name" value="Ribosomal_bL25"/>
    <property type="match status" value="1"/>
</dbReference>
<dbReference type="InterPro" id="IPR020056">
    <property type="entry name" value="Rbsml_bL25/Gln-tRNA_synth_N"/>
</dbReference>
<dbReference type="InterPro" id="IPR011035">
    <property type="entry name" value="Ribosomal_bL25/Gln-tRNA_synth"/>
</dbReference>
<dbReference type="InterPro" id="IPR001021">
    <property type="entry name" value="Ribosomal_bL25_long"/>
</dbReference>
<dbReference type="InterPro" id="IPR020055">
    <property type="entry name" value="Ribosomal_bL25_short"/>
</dbReference>
<dbReference type="InterPro" id="IPR029751">
    <property type="entry name" value="Ribosomal_L25_dom"/>
</dbReference>
<dbReference type="InterPro" id="IPR020930">
    <property type="entry name" value="Ribosomal_uL5_bac-type"/>
</dbReference>
<dbReference type="NCBIfam" id="TIGR00731">
    <property type="entry name" value="bL25_bact_ctc"/>
    <property type="match status" value="1"/>
</dbReference>
<dbReference type="NCBIfam" id="NF004612">
    <property type="entry name" value="PRK05943.1"/>
    <property type="match status" value="1"/>
</dbReference>
<dbReference type="PANTHER" id="PTHR33284">
    <property type="entry name" value="RIBOSOMAL PROTEIN L25/GLN-TRNA SYNTHETASE, ANTI-CODON-BINDING DOMAIN-CONTAINING PROTEIN"/>
    <property type="match status" value="1"/>
</dbReference>
<dbReference type="PANTHER" id="PTHR33284:SF1">
    <property type="entry name" value="RIBOSOMAL PROTEIN L25_GLN-TRNA SYNTHETASE, ANTI-CODON-BINDING DOMAIN-CONTAINING PROTEIN"/>
    <property type="match status" value="1"/>
</dbReference>
<dbReference type="Pfam" id="PF01386">
    <property type="entry name" value="Ribosomal_L25p"/>
    <property type="match status" value="1"/>
</dbReference>
<dbReference type="SUPFAM" id="SSF50715">
    <property type="entry name" value="Ribosomal protein L25-like"/>
    <property type="match status" value="1"/>
</dbReference>
<accession>A6WMN1</accession>
<protein>
    <recommendedName>
        <fullName evidence="1">Large ribosomal subunit protein bL25</fullName>
    </recommendedName>
    <alternativeName>
        <fullName evidence="2">50S ribosomal protein L25</fullName>
    </alternativeName>
</protein>
<proteinExistence type="inferred from homology"/>
<evidence type="ECO:0000255" key="1">
    <source>
        <dbReference type="HAMAP-Rule" id="MF_01336"/>
    </source>
</evidence>
<evidence type="ECO:0000305" key="2"/>
<gene>
    <name evidence="1" type="primary">rplY</name>
    <name type="ordered locus">Shew185_1927</name>
</gene>
<name>RL25_SHEB8</name>
<keyword id="KW-0687">Ribonucleoprotein</keyword>
<keyword id="KW-0689">Ribosomal protein</keyword>
<keyword id="KW-0694">RNA-binding</keyword>
<keyword id="KW-0699">rRNA-binding</keyword>
<reference key="1">
    <citation type="submission" date="2007-07" db="EMBL/GenBank/DDBJ databases">
        <title>Complete sequence of chromosome of Shewanella baltica OS185.</title>
        <authorList>
            <consortium name="US DOE Joint Genome Institute"/>
            <person name="Copeland A."/>
            <person name="Lucas S."/>
            <person name="Lapidus A."/>
            <person name="Barry K."/>
            <person name="Glavina del Rio T."/>
            <person name="Dalin E."/>
            <person name="Tice H."/>
            <person name="Pitluck S."/>
            <person name="Sims D."/>
            <person name="Brettin T."/>
            <person name="Bruce D."/>
            <person name="Detter J.C."/>
            <person name="Han C."/>
            <person name="Schmutz J."/>
            <person name="Larimer F."/>
            <person name="Land M."/>
            <person name="Hauser L."/>
            <person name="Kyrpides N."/>
            <person name="Mikhailova N."/>
            <person name="Brettar I."/>
            <person name="Rodrigues J."/>
            <person name="Konstantinidis K."/>
            <person name="Tiedje J."/>
            <person name="Richardson P."/>
        </authorList>
    </citation>
    <scope>NUCLEOTIDE SEQUENCE [LARGE SCALE GENOMIC DNA]</scope>
    <source>
        <strain>OS185</strain>
    </source>
</reference>